<name>ARGR_STAAE</name>
<organism>
    <name type="scientific">Staphylococcus aureus (strain Newman)</name>
    <dbReference type="NCBI Taxonomy" id="426430"/>
    <lineage>
        <taxon>Bacteria</taxon>
        <taxon>Bacillati</taxon>
        <taxon>Bacillota</taxon>
        <taxon>Bacilli</taxon>
        <taxon>Bacillales</taxon>
        <taxon>Staphylococcaceae</taxon>
        <taxon>Staphylococcus</taxon>
    </lineage>
</organism>
<keyword id="KW-0028">Amino-acid biosynthesis</keyword>
<keyword id="KW-0055">Arginine biosynthesis</keyword>
<keyword id="KW-0963">Cytoplasm</keyword>
<keyword id="KW-0238">DNA-binding</keyword>
<keyword id="KW-0678">Repressor</keyword>
<keyword id="KW-0804">Transcription</keyword>
<keyword id="KW-0805">Transcription regulation</keyword>
<sequence length="150" mass="17098">MPKKSVRHIKIREIISNEQIETQDELVKRLNDYDLNVTQATVSRDIKELQLIKVPIPSGQYVYSLPNDRKFHPLEKLGRYLMDSFVNIDGTDNLLVLKTLPGNAQSIGAILDQINWEEVLGTICGDDTCLIICRSKEASDEIKSRIFNLL</sequence>
<evidence type="ECO:0000255" key="1">
    <source>
        <dbReference type="HAMAP-Rule" id="MF_00173"/>
    </source>
</evidence>
<accession>A6QH66</accession>
<reference key="1">
    <citation type="journal article" date="2008" name="J. Bacteriol.">
        <title>Genome sequence of Staphylococcus aureus strain Newman and comparative analysis of staphylococcal genomes: polymorphism and evolution of two major pathogenicity islands.</title>
        <authorList>
            <person name="Baba T."/>
            <person name="Bae T."/>
            <person name="Schneewind O."/>
            <person name="Takeuchi F."/>
            <person name="Hiramatsu K."/>
        </authorList>
    </citation>
    <scope>NUCLEOTIDE SEQUENCE [LARGE SCALE GENOMIC DNA]</scope>
    <source>
        <strain>Newman</strain>
    </source>
</reference>
<protein>
    <recommendedName>
        <fullName evidence="1">Arginine repressor</fullName>
    </recommendedName>
</protein>
<gene>
    <name evidence="1" type="primary">argR</name>
    <name type="ordered locus">NWMN_1426</name>
</gene>
<dbReference type="EMBL" id="AP009351">
    <property type="protein sequence ID" value="BAF67698.1"/>
    <property type="molecule type" value="Genomic_DNA"/>
</dbReference>
<dbReference type="RefSeq" id="WP_001124985.1">
    <property type="nucleotide sequence ID" value="NZ_JBBIAE010000001.1"/>
</dbReference>
<dbReference type="SMR" id="A6QH66"/>
<dbReference type="GeneID" id="98345891"/>
<dbReference type="KEGG" id="sae:NWMN_1426"/>
<dbReference type="HOGENOM" id="CLU_097103_3_0_9"/>
<dbReference type="UniPathway" id="UPA00068"/>
<dbReference type="Proteomes" id="UP000006386">
    <property type="component" value="Chromosome"/>
</dbReference>
<dbReference type="GO" id="GO:0005737">
    <property type="term" value="C:cytoplasm"/>
    <property type="evidence" value="ECO:0007669"/>
    <property type="project" value="UniProtKB-SubCell"/>
</dbReference>
<dbReference type="GO" id="GO:0034618">
    <property type="term" value="F:arginine binding"/>
    <property type="evidence" value="ECO:0007669"/>
    <property type="project" value="InterPro"/>
</dbReference>
<dbReference type="GO" id="GO:0003677">
    <property type="term" value="F:DNA binding"/>
    <property type="evidence" value="ECO:0007669"/>
    <property type="project" value="UniProtKB-KW"/>
</dbReference>
<dbReference type="GO" id="GO:0003700">
    <property type="term" value="F:DNA-binding transcription factor activity"/>
    <property type="evidence" value="ECO:0007669"/>
    <property type="project" value="UniProtKB-UniRule"/>
</dbReference>
<dbReference type="GO" id="GO:0006526">
    <property type="term" value="P:L-arginine biosynthetic process"/>
    <property type="evidence" value="ECO:0007669"/>
    <property type="project" value="UniProtKB-UniPathway"/>
</dbReference>
<dbReference type="GO" id="GO:0051259">
    <property type="term" value="P:protein complex oligomerization"/>
    <property type="evidence" value="ECO:0007669"/>
    <property type="project" value="InterPro"/>
</dbReference>
<dbReference type="GO" id="GO:1900079">
    <property type="term" value="P:regulation of arginine biosynthetic process"/>
    <property type="evidence" value="ECO:0007669"/>
    <property type="project" value="UniProtKB-UniRule"/>
</dbReference>
<dbReference type="Gene3D" id="3.30.1360.40">
    <property type="match status" value="1"/>
</dbReference>
<dbReference type="Gene3D" id="1.10.10.10">
    <property type="entry name" value="Winged helix-like DNA-binding domain superfamily/Winged helix DNA-binding domain"/>
    <property type="match status" value="1"/>
</dbReference>
<dbReference type="HAMAP" id="MF_00173">
    <property type="entry name" value="Arg_repressor"/>
    <property type="match status" value="1"/>
</dbReference>
<dbReference type="InterPro" id="IPR001669">
    <property type="entry name" value="Arg_repress"/>
</dbReference>
<dbReference type="InterPro" id="IPR020899">
    <property type="entry name" value="Arg_repress_C"/>
</dbReference>
<dbReference type="InterPro" id="IPR036251">
    <property type="entry name" value="Arg_repress_C_sf"/>
</dbReference>
<dbReference type="InterPro" id="IPR020900">
    <property type="entry name" value="Arg_repress_DNA-bd"/>
</dbReference>
<dbReference type="InterPro" id="IPR036388">
    <property type="entry name" value="WH-like_DNA-bd_sf"/>
</dbReference>
<dbReference type="InterPro" id="IPR036390">
    <property type="entry name" value="WH_DNA-bd_sf"/>
</dbReference>
<dbReference type="NCBIfam" id="TIGR01529">
    <property type="entry name" value="argR_whole"/>
    <property type="match status" value="1"/>
</dbReference>
<dbReference type="NCBIfam" id="NF003281">
    <property type="entry name" value="PRK04280.1"/>
    <property type="match status" value="1"/>
</dbReference>
<dbReference type="PANTHER" id="PTHR34471">
    <property type="entry name" value="ARGININE REPRESSOR"/>
    <property type="match status" value="1"/>
</dbReference>
<dbReference type="PANTHER" id="PTHR34471:SF1">
    <property type="entry name" value="ARGININE REPRESSOR"/>
    <property type="match status" value="1"/>
</dbReference>
<dbReference type="Pfam" id="PF01316">
    <property type="entry name" value="Arg_repressor"/>
    <property type="match status" value="1"/>
</dbReference>
<dbReference type="Pfam" id="PF02863">
    <property type="entry name" value="Arg_repressor_C"/>
    <property type="match status" value="1"/>
</dbReference>
<dbReference type="PRINTS" id="PR01467">
    <property type="entry name" value="ARGREPRESSOR"/>
</dbReference>
<dbReference type="SUPFAM" id="SSF55252">
    <property type="entry name" value="C-terminal domain of arginine repressor"/>
    <property type="match status" value="1"/>
</dbReference>
<dbReference type="SUPFAM" id="SSF46785">
    <property type="entry name" value="Winged helix' DNA-binding domain"/>
    <property type="match status" value="1"/>
</dbReference>
<feature type="chain" id="PRO_1000071617" description="Arginine repressor">
    <location>
        <begin position="1"/>
        <end position="150"/>
    </location>
</feature>
<comment type="function">
    <text evidence="1">Regulates arginine biosynthesis genes.</text>
</comment>
<comment type="pathway">
    <text>Amino-acid biosynthesis; L-arginine biosynthesis [regulation].</text>
</comment>
<comment type="subcellular location">
    <subcellularLocation>
        <location evidence="1">Cytoplasm</location>
    </subcellularLocation>
</comment>
<comment type="similarity">
    <text evidence="1">Belongs to the ArgR family.</text>
</comment>
<proteinExistence type="inferred from homology"/>